<gene>
    <name evidence="1" type="primary">fucI</name>
    <name type="ordered locus">ECDH10B_2971</name>
</gene>
<evidence type="ECO:0000255" key="1">
    <source>
        <dbReference type="HAMAP-Rule" id="MF_01254"/>
    </source>
</evidence>
<proteinExistence type="inferred from homology"/>
<feature type="chain" id="PRO_1000139952" description="L-fucose isomerase">
    <location>
        <begin position="1"/>
        <end position="591"/>
    </location>
</feature>
<feature type="active site" description="Proton acceptor" evidence="1">
    <location>
        <position position="337"/>
    </location>
</feature>
<feature type="active site" description="Proton acceptor" evidence="1">
    <location>
        <position position="361"/>
    </location>
</feature>
<feature type="binding site" evidence="1">
    <location>
        <position position="337"/>
    </location>
    <ligand>
        <name>Mn(2+)</name>
        <dbReference type="ChEBI" id="CHEBI:29035"/>
    </ligand>
</feature>
<feature type="binding site" evidence="1">
    <location>
        <position position="361"/>
    </location>
    <ligand>
        <name>Mn(2+)</name>
        <dbReference type="ChEBI" id="CHEBI:29035"/>
    </ligand>
</feature>
<feature type="binding site" evidence="1">
    <location>
        <position position="528"/>
    </location>
    <ligand>
        <name>Mn(2+)</name>
        <dbReference type="ChEBI" id="CHEBI:29035"/>
    </ligand>
</feature>
<comment type="function">
    <text evidence="1">Converts the aldose L-fucose into the corresponding ketose L-fuculose.</text>
</comment>
<comment type="catalytic activity">
    <reaction evidence="1">
        <text>L-fucose = L-fuculose</text>
        <dbReference type="Rhea" id="RHEA:17233"/>
        <dbReference type="ChEBI" id="CHEBI:2181"/>
        <dbReference type="ChEBI" id="CHEBI:17617"/>
        <dbReference type="EC" id="5.3.1.25"/>
    </reaction>
</comment>
<comment type="cofactor">
    <cofactor evidence="1">
        <name>Mn(2+)</name>
        <dbReference type="ChEBI" id="CHEBI:29035"/>
    </cofactor>
</comment>
<comment type="pathway">
    <text evidence="1">Carbohydrate degradation; L-fucose degradation; L-lactaldehyde and glycerone phosphate from L-fucose: step 1/3.</text>
</comment>
<comment type="subunit">
    <text evidence="1">Homohexamer.</text>
</comment>
<comment type="subcellular location">
    <subcellularLocation>
        <location evidence="1">Cytoplasm</location>
    </subcellularLocation>
</comment>
<comment type="similarity">
    <text evidence="1">Belongs to the L-fucose isomerase family.</text>
</comment>
<protein>
    <recommendedName>
        <fullName evidence="1">L-fucose isomerase</fullName>
        <ecNumber evidence="1">5.3.1.25</ecNumber>
    </recommendedName>
    <alternativeName>
        <fullName evidence="1">6-deoxy-L-galactose isomerase</fullName>
    </alternativeName>
    <alternativeName>
        <fullName>FucIase</fullName>
    </alternativeName>
</protein>
<reference key="1">
    <citation type="journal article" date="2008" name="J. Bacteriol.">
        <title>The complete genome sequence of Escherichia coli DH10B: insights into the biology of a laboratory workhorse.</title>
        <authorList>
            <person name="Durfee T."/>
            <person name="Nelson R."/>
            <person name="Baldwin S."/>
            <person name="Plunkett G. III"/>
            <person name="Burland V."/>
            <person name="Mau B."/>
            <person name="Petrosino J.F."/>
            <person name="Qin X."/>
            <person name="Muzny D.M."/>
            <person name="Ayele M."/>
            <person name="Gibbs R.A."/>
            <person name="Csorgo B."/>
            <person name="Posfai G."/>
            <person name="Weinstock G.M."/>
            <person name="Blattner F.R."/>
        </authorList>
    </citation>
    <scope>NUCLEOTIDE SEQUENCE [LARGE SCALE GENOMIC DNA]</scope>
    <source>
        <strain>K12 / DH10B</strain>
    </source>
</reference>
<keyword id="KW-0119">Carbohydrate metabolism</keyword>
<keyword id="KW-0963">Cytoplasm</keyword>
<keyword id="KW-0294">Fucose metabolism</keyword>
<keyword id="KW-0413">Isomerase</keyword>
<keyword id="KW-0464">Manganese</keyword>
<keyword id="KW-0479">Metal-binding</keyword>
<dbReference type="EC" id="5.3.1.25" evidence="1"/>
<dbReference type="EMBL" id="CP000948">
    <property type="protein sequence ID" value="ACB03915.1"/>
    <property type="molecule type" value="Genomic_DNA"/>
</dbReference>
<dbReference type="RefSeq" id="WP_000724153.1">
    <property type="nucleotide sequence ID" value="NC_010473.1"/>
</dbReference>
<dbReference type="SMR" id="B1XDL1"/>
<dbReference type="GeneID" id="75172886"/>
<dbReference type="KEGG" id="ecd:ECDH10B_2971"/>
<dbReference type="HOGENOM" id="CLU_033326_1_0_6"/>
<dbReference type="UniPathway" id="UPA00563">
    <property type="reaction ID" value="UER00624"/>
</dbReference>
<dbReference type="GO" id="GO:0005737">
    <property type="term" value="C:cytoplasm"/>
    <property type="evidence" value="ECO:0007669"/>
    <property type="project" value="UniProtKB-SubCell"/>
</dbReference>
<dbReference type="GO" id="GO:0008790">
    <property type="term" value="F:arabinose isomerase activity"/>
    <property type="evidence" value="ECO:0007669"/>
    <property type="project" value="TreeGrafter"/>
</dbReference>
<dbReference type="GO" id="GO:0008736">
    <property type="term" value="F:L-fucose isomerase activity"/>
    <property type="evidence" value="ECO:0007669"/>
    <property type="project" value="UniProtKB-UniRule"/>
</dbReference>
<dbReference type="GO" id="GO:0030145">
    <property type="term" value="F:manganese ion binding"/>
    <property type="evidence" value="ECO:0007669"/>
    <property type="project" value="UniProtKB-UniRule"/>
</dbReference>
<dbReference type="GO" id="GO:0019571">
    <property type="term" value="P:D-arabinose catabolic process"/>
    <property type="evidence" value="ECO:0007669"/>
    <property type="project" value="TreeGrafter"/>
</dbReference>
<dbReference type="GO" id="GO:0042355">
    <property type="term" value="P:L-fucose catabolic process"/>
    <property type="evidence" value="ECO:0007669"/>
    <property type="project" value="UniProtKB-UniRule"/>
</dbReference>
<dbReference type="CDD" id="cd03556">
    <property type="entry name" value="L-fucose_isomerase"/>
    <property type="match status" value="1"/>
</dbReference>
<dbReference type="FunFam" id="3.20.14.10:FF:000001">
    <property type="entry name" value="L-fucose isomerase"/>
    <property type="match status" value="1"/>
</dbReference>
<dbReference type="FunFam" id="3.40.275.10:FF:000001">
    <property type="entry name" value="L-fucose isomerase"/>
    <property type="match status" value="1"/>
</dbReference>
<dbReference type="FunFam" id="3.40.50.1070:FF:000001">
    <property type="entry name" value="L-fucose isomerase"/>
    <property type="match status" value="1"/>
</dbReference>
<dbReference type="Gene3D" id="3.40.50.1070">
    <property type="match status" value="1"/>
</dbReference>
<dbReference type="Gene3D" id="3.40.275.10">
    <property type="entry name" value="L-fucose Isomerase, Chain A, domain 2"/>
    <property type="match status" value="1"/>
</dbReference>
<dbReference type="Gene3D" id="3.20.14.10">
    <property type="entry name" value="L-fucose/L-arabinose isomerase, C-terminal"/>
    <property type="match status" value="1"/>
</dbReference>
<dbReference type="HAMAP" id="MF_01254">
    <property type="entry name" value="Fucose_iso"/>
    <property type="match status" value="1"/>
</dbReference>
<dbReference type="InterPro" id="IPR004216">
    <property type="entry name" value="Fuc/Ara_isomerase_C"/>
</dbReference>
<dbReference type="InterPro" id="IPR038393">
    <property type="entry name" value="Fuc_iso_dom3_sf"/>
</dbReference>
<dbReference type="InterPro" id="IPR015888">
    <property type="entry name" value="Fuc_isomerase_C"/>
</dbReference>
<dbReference type="InterPro" id="IPR038391">
    <property type="entry name" value="Fucose_iso_dom1_sf"/>
</dbReference>
<dbReference type="InterPro" id="IPR012888">
    <property type="entry name" value="Fucose_iso_N1"/>
</dbReference>
<dbReference type="InterPro" id="IPR005763">
    <property type="entry name" value="Fucose_isomerase"/>
</dbReference>
<dbReference type="InterPro" id="IPR038392">
    <property type="entry name" value="Fucose_isomerase_dom2_sf"/>
</dbReference>
<dbReference type="InterPro" id="IPR009015">
    <property type="entry name" value="Fucose_isomerase_N/cen_sf"/>
</dbReference>
<dbReference type="InterPro" id="IPR012889">
    <property type="entry name" value="Fucose_isomerase_N2"/>
</dbReference>
<dbReference type="NCBIfam" id="TIGR01089">
    <property type="entry name" value="fucI"/>
    <property type="match status" value="1"/>
</dbReference>
<dbReference type="NCBIfam" id="NF008220">
    <property type="entry name" value="PRK10991.1"/>
    <property type="match status" value="1"/>
</dbReference>
<dbReference type="PANTHER" id="PTHR37840">
    <property type="entry name" value="L-FUCOSE ISOMERASE"/>
    <property type="match status" value="1"/>
</dbReference>
<dbReference type="PANTHER" id="PTHR37840:SF1">
    <property type="entry name" value="L-FUCOSE ISOMERASE"/>
    <property type="match status" value="1"/>
</dbReference>
<dbReference type="Pfam" id="PF02952">
    <property type="entry name" value="Fucose_iso_C"/>
    <property type="match status" value="1"/>
</dbReference>
<dbReference type="Pfam" id="PF07881">
    <property type="entry name" value="Fucose_iso_N1"/>
    <property type="match status" value="1"/>
</dbReference>
<dbReference type="Pfam" id="PF07882">
    <property type="entry name" value="Fucose_iso_N2"/>
    <property type="match status" value="1"/>
</dbReference>
<dbReference type="SUPFAM" id="SSF50443">
    <property type="entry name" value="FucI/AraA C-terminal domain-like"/>
    <property type="match status" value="1"/>
</dbReference>
<dbReference type="SUPFAM" id="SSF53743">
    <property type="entry name" value="FucI/AraA N-terminal and middle domains"/>
    <property type="match status" value="1"/>
</dbReference>
<accession>B1XDL1</accession>
<organism>
    <name type="scientific">Escherichia coli (strain K12 / DH10B)</name>
    <dbReference type="NCBI Taxonomy" id="316385"/>
    <lineage>
        <taxon>Bacteria</taxon>
        <taxon>Pseudomonadati</taxon>
        <taxon>Pseudomonadota</taxon>
        <taxon>Gammaproteobacteria</taxon>
        <taxon>Enterobacterales</taxon>
        <taxon>Enterobacteriaceae</taxon>
        <taxon>Escherichia</taxon>
    </lineage>
</organism>
<sequence>MKKISLPKIGIRPVIDGRRMGVRESLEEQTMNMAKATAALLTEKLRHACGAAVECVISDTCIAGMAEAAACEEKFSSQNVGLTITVTPCWCYGSETIDMDPTRPKAIWGFNGTERPGAVYLAAALAAHSQKGIPAFSIYGHDVQDADDTSIPADVEEKLLRFARAGLAVASMKGKSYLSLGGVSMGIAGSIVDHNFFESWLGMKVQAVDMTELRRRIDQKIYDEAELEMALAWADKNFRYGEDENNKQYQRNAEQSRAVLRESLLMAMCIRDMMQGNSKLADIGRVEESLGYNAIAAGFQGQRHWTDQYPNGDTAEAILNSSFDWNGVREPFVVATENDSLNGVAMLMGHQLTGTAQVFADVRTYWSPEAIERVTGHKLDGLAEHGIIHLINSGSAALDGSCKQRDSEGNPTMKPHWEISQQEADACLAATEWCPAIHEYFRGGGYSSRFLTEGGVPFTMTRVNIIKGLGPVLQIAEGWSVELPKDVHDILNKRTNSTWPTTWFAPRLTGKGPFTDVYSVMANWGANHGVLTIGHVGADFITLASMLRIPVCMHNVEETKVYRPSAWAAHGMDIEGQDYRACQNYGPLYKR</sequence>
<name>FUCI_ECODH</name>